<proteinExistence type="evidence at protein level"/>
<evidence type="ECO:0000255" key="1">
    <source>
        <dbReference type="HAMAP-Rule" id="MF_00147"/>
    </source>
</evidence>
<evidence type="ECO:0007829" key="2">
    <source>
        <dbReference type="PDB" id="5CSR"/>
    </source>
</evidence>
<evidence type="ECO:0007829" key="3">
    <source>
        <dbReference type="PDB" id="5CSS"/>
    </source>
</evidence>
<keyword id="KW-0002">3D-structure</keyword>
<keyword id="KW-0963">Cytoplasm</keyword>
<keyword id="KW-0312">Gluconeogenesis</keyword>
<keyword id="KW-0324">Glycolysis</keyword>
<keyword id="KW-0413">Isomerase</keyword>
<keyword id="KW-1185">Reference proteome</keyword>
<sequence length="216" mass="23848">MYTAIVNLKTYREATGANFTRFMEKFEPVQGKFELIFSPSLLDLEKAAKCGKFRFFAQHVDAEPYGAYTGHVPMDMMIDLGITGSILNHSERRLPRDTIINTLKKASKLDFTIVLCVENAEEAKYFREYEPDFIAYEPRDLIGGDVSVSTAKPEIIEDIVKIYEGTGTSVLVGAGIKTGEDVRRSIGLGARGILVASGVVKSADPTKSLNSLIELK</sequence>
<organism>
    <name type="scientific">Thermoplasma acidophilum (strain ATCC 25905 / DSM 1728 / JCM 9062 / NBRC 15155 / AMRC-C165)</name>
    <dbReference type="NCBI Taxonomy" id="273075"/>
    <lineage>
        <taxon>Archaea</taxon>
        <taxon>Methanobacteriati</taxon>
        <taxon>Thermoplasmatota</taxon>
        <taxon>Thermoplasmata</taxon>
        <taxon>Thermoplasmatales</taxon>
        <taxon>Thermoplasmataceae</taxon>
        <taxon>Thermoplasma</taxon>
    </lineage>
</organism>
<protein>
    <recommendedName>
        <fullName evidence="1">Triosephosphate isomerase</fullName>
        <shortName evidence="1">TIM</shortName>
        <shortName evidence="1">TPI</shortName>
        <ecNumber evidence="1">5.3.1.1</ecNumber>
    </recommendedName>
    <alternativeName>
        <fullName evidence="1">Triose-phosphate isomerase</fullName>
    </alternativeName>
</protein>
<reference key="1">
    <citation type="journal article" date="2000" name="Nature">
        <title>The genome sequence of the thermoacidophilic scavenger Thermoplasma acidophilum.</title>
        <authorList>
            <person name="Ruepp A."/>
            <person name="Graml W."/>
            <person name="Santos-Martinez M.-L."/>
            <person name="Koretke K.K."/>
            <person name="Volker C."/>
            <person name="Mewes H.-W."/>
            <person name="Frishman D."/>
            <person name="Stocker S."/>
            <person name="Lupas A.N."/>
            <person name="Baumeister W."/>
        </authorList>
    </citation>
    <scope>NUCLEOTIDE SEQUENCE [LARGE SCALE GENOMIC DNA]</scope>
    <source>
        <strain>ATCC 25905 / DSM 1728 / JCM 9062 / NBRC 15155 / AMRC-C165</strain>
    </source>
</reference>
<comment type="function">
    <text evidence="1">Involved in the gluconeogenesis. Catalyzes stereospecifically the conversion of dihydroxyacetone phosphate (DHAP) to D-glyceraldehyde-3-phosphate (G3P).</text>
</comment>
<comment type="catalytic activity">
    <reaction evidence="1">
        <text>D-glyceraldehyde 3-phosphate = dihydroxyacetone phosphate</text>
        <dbReference type="Rhea" id="RHEA:18585"/>
        <dbReference type="ChEBI" id="CHEBI:57642"/>
        <dbReference type="ChEBI" id="CHEBI:59776"/>
        <dbReference type="EC" id="5.3.1.1"/>
    </reaction>
</comment>
<comment type="pathway">
    <text evidence="1">Carbohydrate biosynthesis; gluconeogenesis.</text>
</comment>
<comment type="pathway">
    <text evidence="1">Carbohydrate degradation; glycolysis; D-glyceraldehyde 3-phosphate from glycerone phosphate: step 1/1.</text>
</comment>
<comment type="subunit">
    <text evidence="1">Homotetramer; dimer of dimers.</text>
</comment>
<comment type="subcellular location">
    <subcellularLocation>
        <location evidence="1">Cytoplasm</location>
    </subcellularLocation>
</comment>
<comment type="similarity">
    <text evidence="1">Belongs to the triosephosphate isomerase family.</text>
</comment>
<accession>Q9HLB6</accession>
<name>TPIS_THEAC</name>
<feature type="chain" id="PRO_0000090348" description="Triosephosphate isomerase">
    <location>
        <begin position="1"/>
        <end position="216"/>
    </location>
</feature>
<feature type="active site" description="Electrophile" evidence="1">
    <location>
        <position position="89"/>
    </location>
</feature>
<feature type="active site" description="Proton acceptor" evidence="1">
    <location>
        <position position="137"/>
    </location>
</feature>
<feature type="binding site" evidence="1">
    <location>
        <begin position="7"/>
        <end position="9"/>
    </location>
    <ligand>
        <name>substrate</name>
    </ligand>
</feature>
<feature type="binding site" evidence="1">
    <location>
        <position position="142"/>
    </location>
    <ligand>
        <name>substrate</name>
    </ligand>
</feature>
<feature type="binding site" evidence="1">
    <location>
        <position position="175"/>
    </location>
    <ligand>
        <name>substrate</name>
    </ligand>
</feature>
<feature type="binding site" evidence="1">
    <location>
        <begin position="196"/>
        <end position="197"/>
    </location>
    <ligand>
        <name>substrate</name>
    </ligand>
</feature>
<feature type="strand" evidence="2">
    <location>
        <begin position="2"/>
        <end position="7"/>
    </location>
</feature>
<feature type="helix" evidence="2">
    <location>
        <begin position="12"/>
        <end position="14"/>
    </location>
</feature>
<feature type="helix" evidence="2">
    <location>
        <begin position="17"/>
        <end position="25"/>
    </location>
</feature>
<feature type="strand" evidence="2">
    <location>
        <begin position="31"/>
        <end position="38"/>
    </location>
</feature>
<feature type="helix" evidence="2">
    <location>
        <begin position="41"/>
        <end position="43"/>
    </location>
</feature>
<feature type="helix" evidence="2">
    <location>
        <begin position="44"/>
        <end position="50"/>
    </location>
</feature>
<feature type="strand" evidence="2">
    <location>
        <begin position="52"/>
        <end position="55"/>
    </location>
</feature>
<feature type="strand" evidence="2">
    <location>
        <begin position="65"/>
        <end position="67"/>
    </location>
</feature>
<feature type="helix" evidence="2">
    <location>
        <begin position="74"/>
        <end position="80"/>
    </location>
</feature>
<feature type="strand" evidence="2">
    <location>
        <begin position="84"/>
        <end position="88"/>
    </location>
</feature>
<feature type="helix" evidence="2">
    <location>
        <begin position="96"/>
        <end position="109"/>
    </location>
</feature>
<feature type="strand" evidence="2">
    <location>
        <begin position="112"/>
        <end position="119"/>
    </location>
</feature>
<feature type="helix" evidence="2">
    <location>
        <begin position="120"/>
        <end position="126"/>
    </location>
</feature>
<feature type="helix" evidence="2">
    <location>
        <begin position="127"/>
        <end position="129"/>
    </location>
</feature>
<feature type="strand" evidence="2">
    <location>
        <begin position="132"/>
        <end position="136"/>
    </location>
</feature>
<feature type="helix" evidence="2">
    <location>
        <begin position="139"/>
        <end position="141"/>
    </location>
</feature>
<feature type="strand" evidence="3">
    <location>
        <begin position="144"/>
        <end position="146"/>
    </location>
</feature>
<feature type="helix" evidence="2">
    <location>
        <begin position="148"/>
        <end position="150"/>
    </location>
</feature>
<feature type="helix" evidence="2">
    <location>
        <begin position="154"/>
        <end position="163"/>
    </location>
</feature>
<feature type="strand" evidence="2">
    <location>
        <begin position="169"/>
        <end position="172"/>
    </location>
</feature>
<feature type="helix" evidence="2">
    <location>
        <begin position="179"/>
        <end position="187"/>
    </location>
</feature>
<feature type="strand" evidence="2">
    <location>
        <begin position="192"/>
        <end position="195"/>
    </location>
</feature>
<feature type="helix" evidence="2">
    <location>
        <begin position="197"/>
        <end position="200"/>
    </location>
</feature>
<feature type="strand" evidence="2">
    <location>
        <begin position="202"/>
        <end position="204"/>
    </location>
</feature>
<feature type="helix" evidence="2">
    <location>
        <begin position="205"/>
        <end position="213"/>
    </location>
</feature>
<dbReference type="EC" id="5.3.1.1" evidence="1"/>
<dbReference type="EMBL" id="AL445063">
    <property type="protein sequence ID" value="CAC11458.1"/>
    <property type="molecule type" value="Genomic_DNA"/>
</dbReference>
<dbReference type="RefSeq" id="WP_010900742.1">
    <property type="nucleotide sequence ID" value="NC_002578.1"/>
</dbReference>
<dbReference type="PDB" id="5CSR">
    <property type="method" value="X-ray"/>
    <property type="resolution" value="1.94 A"/>
    <property type="chains" value="A/B/C/D=1-216"/>
</dbReference>
<dbReference type="PDB" id="5CSS">
    <property type="method" value="X-ray"/>
    <property type="resolution" value="2.17 A"/>
    <property type="chains" value="A/B/C/D=1-216"/>
</dbReference>
<dbReference type="PDBsum" id="5CSR"/>
<dbReference type="PDBsum" id="5CSS"/>
<dbReference type="SMR" id="Q9HLB6"/>
<dbReference type="FunCoup" id="Q9HLB6">
    <property type="interactions" value="150"/>
</dbReference>
<dbReference type="STRING" id="273075.gene:9571530"/>
<dbReference type="PaxDb" id="273075-Ta0313"/>
<dbReference type="EnsemblBacteria" id="CAC11458">
    <property type="protein sequence ID" value="CAC11458"/>
    <property type="gene ID" value="CAC11458"/>
</dbReference>
<dbReference type="KEGG" id="tac:Ta0313"/>
<dbReference type="eggNOG" id="arCOG01087">
    <property type="taxonomic scope" value="Archaea"/>
</dbReference>
<dbReference type="HOGENOM" id="CLU_104921_0_0_2"/>
<dbReference type="InParanoid" id="Q9HLB6"/>
<dbReference type="OrthoDB" id="9465at2157"/>
<dbReference type="BRENDA" id="5.3.1.1">
    <property type="organism ID" value="6324"/>
</dbReference>
<dbReference type="UniPathway" id="UPA00109">
    <property type="reaction ID" value="UER00189"/>
</dbReference>
<dbReference type="UniPathway" id="UPA00138"/>
<dbReference type="Proteomes" id="UP000001024">
    <property type="component" value="Chromosome"/>
</dbReference>
<dbReference type="GO" id="GO:0005737">
    <property type="term" value="C:cytoplasm"/>
    <property type="evidence" value="ECO:0007669"/>
    <property type="project" value="UniProtKB-SubCell"/>
</dbReference>
<dbReference type="GO" id="GO:0004807">
    <property type="term" value="F:triose-phosphate isomerase activity"/>
    <property type="evidence" value="ECO:0007669"/>
    <property type="project" value="UniProtKB-UniRule"/>
</dbReference>
<dbReference type="GO" id="GO:0006094">
    <property type="term" value="P:gluconeogenesis"/>
    <property type="evidence" value="ECO:0007669"/>
    <property type="project" value="UniProtKB-UniRule"/>
</dbReference>
<dbReference type="GO" id="GO:0006096">
    <property type="term" value="P:glycolytic process"/>
    <property type="evidence" value="ECO:0007669"/>
    <property type="project" value="UniProtKB-UniRule"/>
</dbReference>
<dbReference type="CDD" id="cd00311">
    <property type="entry name" value="TIM"/>
    <property type="match status" value="1"/>
</dbReference>
<dbReference type="Gene3D" id="3.20.20.70">
    <property type="entry name" value="Aldolase class I"/>
    <property type="match status" value="1"/>
</dbReference>
<dbReference type="HAMAP" id="MF_00147_A">
    <property type="entry name" value="TIM_A"/>
    <property type="match status" value="1"/>
</dbReference>
<dbReference type="InterPro" id="IPR013785">
    <property type="entry name" value="Aldolase_TIM"/>
</dbReference>
<dbReference type="InterPro" id="IPR035990">
    <property type="entry name" value="TIM_sf"/>
</dbReference>
<dbReference type="InterPro" id="IPR000652">
    <property type="entry name" value="Triosephosphate_isomerase"/>
</dbReference>
<dbReference type="InterPro" id="IPR022891">
    <property type="entry name" value="Triosephosphate_isomerase_arc"/>
</dbReference>
<dbReference type="NCBIfam" id="NF003302">
    <property type="entry name" value="PRK04302.1"/>
    <property type="match status" value="1"/>
</dbReference>
<dbReference type="Pfam" id="PF00121">
    <property type="entry name" value="TIM"/>
    <property type="match status" value="1"/>
</dbReference>
<dbReference type="SUPFAM" id="SSF51351">
    <property type="entry name" value="Triosephosphate isomerase (TIM)"/>
    <property type="match status" value="1"/>
</dbReference>
<dbReference type="PROSITE" id="PS51440">
    <property type="entry name" value="TIM_2"/>
    <property type="match status" value="1"/>
</dbReference>
<gene>
    <name evidence="1" type="primary">tpiA</name>
    <name type="ordered locus">Ta0313</name>
</gene>